<protein>
    <recommendedName>
        <fullName>Anti-sigma factor RshA</fullName>
    </recommendedName>
    <alternativeName>
        <fullName>Regulator of SigH</fullName>
    </alternativeName>
    <alternativeName>
        <fullName>Sigma-H anti-sigma factor RshA</fullName>
    </alternativeName>
</protein>
<dbReference type="EMBL" id="AF144091">
    <property type="protein sequence ID" value="AAD41811.1"/>
    <property type="molecule type" value="Genomic_DNA"/>
</dbReference>
<dbReference type="EMBL" id="CP000480">
    <property type="protein sequence ID" value="ABK70150.1"/>
    <property type="molecule type" value="Genomic_DNA"/>
</dbReference>
<dbReference type="EMBL" id="CP001663">
    <property type="protein sequence ID" value="AFP38347.1"/>
    <property type="molecule type" value="Genomic_DNA"/>
</dbReference>
<dbReference type="RefSeq" id="YP_886281.1">
    <property type="nucleotide sequence ID" value="NC_008596.1"/>
</dbReference>
<dbReference type="SMR" id="A0QTP3"/>
<dbReference type="STRING" id="246196.MSMEG_1915"/>
<dbReference type="PaxDb" id="246196-MSMEI_1875"/>
<dbReference type="KEGG" id="msb:LJ00_09560"/>
<dbReference type="KEGG" id="msg:MSMEI_1875"/>
<dbReference type="KEGG" id="msm:MSMEG_1915"/>
<dbReference type="PATRIC" id="fig|246196.19.peg.1897"/>
<dbReference type="eggNOG" id="COG5662">
    <property type="taxonomic scope" value="Bacteria"/>
</dbReference>
<dbReference type="OrthoDB" id="3267840at2"/>
<dbReference type="Proteomes" id="UP000000757">
    <property type="component" value="Chromosome"/>
</dbReference>
<dbReference type="Proteomes" id="UP000006158">
    <property type="component" value="Chromosome"/>
</dbReference>
<dbReference type="GO" id="GO:0051536">
    <property type="term" value="F:iron-sulfur cluster binding"/>
    <property type="evidence" value="ECO:0007669"/>
    <property type="project" value="UniProtKB-KW"/>
</dbReference>
<dbReference type="GO" id="GO:0046872">
    <property type="term" value="F:metal ion binding"/>
    <property type="evidence" value="ECO:0007669"/>
    <property type="project" value="UniProtKB-KW"/>
</dbReference>
<dbReference type="InterPro" id="IPR024020">
    <property type="entry name" value="Anit_sigma_mycothiol_RsrA"/>
</dbReference>
<dbReference type="InterPro" id="IPR027383">
    <property type="entry name" value="Znf_put"/>
</dbReference>
<dbReference type="NCBIfam" id="TIGR03988">
    <property type="entry name" value="antisig_RsrA"/>
    <property type="match status" value="1"/>
</dbReference>
<dbReference type="Pfam" id="PF13490">
    <property type="entry name" value="zf-HC2"/>
    <property type="match status" value="1"/>
</dbReference>
<accession>A0QTP3</accession>
<accession>Q9XCD7</accession>
<reference key="1">
    <citation type="journal article" date="1999" name="J. Bacteriol.">
        <title>A mycobacterial extracytoplasmic sigma factor involved in survival following heat shock and oxidative stress.</title>
        <authorList>
            <person name="Fernandes N.D."/>
            <person name="Wu Q.-L."/>
            <person name="Kong D."/>
            <person name="Puyang X."/>
            <person name="Garg S."/>
            <person name="Husson R.N."/>
        </authorList>
    </citation>
    <scope>NUCLEOTIDE SEQUENCE [GENOMIC DNA]</scope>
    <scope>INDUCTION</scope>
    <source>
        <strain>ATCC 700084 / mc(2)155</strain>
    </source>
</reference>
<reference key="2">
    <citation type="submission" date="2006-10" db="EMBL/GenBank/DDBJ databases">
        <authorList>
            <person name="Fleischmann R.D."/>
            <person name="Dodson R.J."/>
            <person name="Haft D.H."/>
            <person name="Merkel J.S."/>
            <person name="Nelson W.C."/>
            <person name="Fraser C.M."/>
        </authorList>
    </citation>
    <scope>NUCLEOTIDE SEQUENCE [LARGE SCALE GENOMIC DNA]</scope>
    <source>
        <strain>ATCC 700084 / mc(2)155</strain>
    </source>
</reference>
<reference key="3">
    <citation type="journal article" date="2007" name="Genome Biol.">
        <title>Interrupted coding sequences in Mycobacterium smegmatis: authentic mutations or sequencing errors?</title>
        <authorList>
            <person name="Deshayes C."/>
            <person name="Perrodou E."/>
            <person name="Gallien S."/>
            <person name="Euphrasie D."/>
            <person name="Schaeffer C."/>
            <person name="Van-Dorsselaer A."/>
            <person name="Poch O."/>
            <person name="Lecompte O."/>
            <person name="Reyrat J.-M."/>
        </authorList>
    </citation>
    <scope>NUCLEOTIDE SEQUENCE [LARGE SCALE GENOMIC DNA]</scope>
    <source>
        <strain>ATCC 700084 / mc(2)155</strain>
    </source>
</reference>
<reference key="4">
    <citation type="journal article" date="2009" name="Genome Res.">
        <title>Ortho-proteogenomics: multiple proteomes investigation through orthology and a new MS-based protocol.</title>
        <authorList>
            <person name="Gallien S."/>
            <person name="Perrodou E."/>
            <person name="Carapito C."/>
            <person name="Deshayes C."/>
            <person name="Reyrat J.-M."/>
            <person name="Van Dorsselaer A."/>
            <person name="Poch O."/>
            <person name="Schaeffer C."/>
            <person name="Lecompte O."/>
        </authorList>
    </citation>
    <scope>NUCLEOTIDE SEQUENCE [LARGE SCALE GENOMIC DNA]</scope>
    <source>
        <strain>ATCC 700084 / mc(2)155</strain>
    </source>
</reference>
<reference key="5">
    <citation type="journal article" date="2003" name="Mol. Microbiol.">
        <title>RshA, an anti-sigma factor that regulates the activity of the mycobacterial stress response sigma factor SigH.</title>
        <authorList>
            <person name="Song T."/>
            <person name="Dove S.L."/>
            <person name="Lee K.H."/>
            <person name="Husson R.N."/>
        </authorList>
    </citation>
    <scope>PROBABLE INTERACTION WITH SIGH</scope>
    <scope>MUTAGENESIS OF CYS-25; CYS-40; CYS-55; CYS-58 AND CYS-76</scope>
    <source>
        <strain>ATCC 700084 / mc(2)155</strain>
    </source>
</reference>
<reference key="6">
    <citation type="journal article" date="2008" name="Proc. Natl. Acad. Sci. U.S.A.">
        <title>Regulation of the SigH stress response regulon by an essential protein kinase in Mycobacterium tuberculosis.</title>
        <authorList>
            <person name="Park S.T."/>
            <person name="Kang C.M."/>
            <person name="Husson R.N."/>
        </authorList>
    </citation>
    <scope>POSSIBLE PHOSPHORYLATION</scope>
    <scope>REGULATION</scope>
</reference>
<comment type="function">
    <text evidence="6">A redox-regulated anti-sigma factor for cognate extracytoplasmic function (ECF) sigma factor SigH. ECF sigma factors are held in an inactive form by an anti-sigma factor (Probable). Overexpression leads to increased susceptibility to diamide.</text>
</comment>
<comment type="cofactor">
    <cofactor evidence="6">
        <name>iron-sulfur cluster</name>
        <dbReference type="ChEBI" id="CHEBI:30408"/>
    </cofactor>
    <text evidence="6">Binds 1 iron-sulfur cluster per subunit.</text>
</comment>
<comment type="subunit">
    <text>Interacts with cognate ECF RNA polymerase sigma factor SigH under reducing conditions; the complex is disrupted under oxiding conditions or as temperatures rise. Binding inhibits the interaction of SigH with the RNA polymerase catalytic core.</text>
</comment>
<comment type="induction">
    <text evidence="4">Induced after heat shock (50 degress Celsius). Part of the sigH-rshA operon.</text>
</comment>
<comment type="PTM">
    <text evidence="6">Phosphorylated, probably by PknB (Probable). Phosphorylation decreases interaction with SigH, probably leading to increased SigH-mediated transcription.</text>
</comment>
<comment type="similarity">
    <text evidence="6">Belongs to the zinc-associated anti-sigma factor (ZAS) superfamily.</text>
</comment>
<sequence>MSETEREDERWTPPIGPIDPEHPECAAVIAEVWTLLDGECTPETRDKLKQHLEECPTCLRHYGIEERVKRLIAAKCSGEKAPDSLRERLRIQISRTTIIRG</sequence>
<gene>
    <name type="primary">rshA</name>
    <name type="ordered locus">MSMEG_1915</name>
    <name type="ordered locus">MSMEI_1875</name>
</gene>
<keyword id="KW-0408">Iron</keyword>
<keyword id="KW-0411">Iron-sulfur</keyword>
<keyword id="KW-0479">Metal-binding</keyword>
<keyword id="KW-0597">Phosphoprotein</keyword>
<keyword id="KW-1185">Reference proteome</keyword>
<keyword id="KW-0804">Transcription</keyword>
<keyword id="KW-0805">Transcription regulation</keyword>
<proteinExistence type="evidence at protein level"/>
<evidence type="ECO:0000250" key="1"/>
<evidence type="ECO:0000255" key="2"/>
<evidence type="ECO:0000256" key="3">
    <source>
        <dbReference type="SAM" id="MobiDB-lite"/>
    </source>
</evidence>
<evidence type="ECO:0000269" key="4">
    <source>
    </source>
</evidence>
<evidence type="ECO:0000269" key="5">
    <source>
    </source>
</evidence>
<evidence type="ECO:0000305" key="6"/>
<name>RSHA_MYCS2</name>
<feature type="chain" id="PRO_0000423651" description="Anti-sigma factor RshA">
    <location>
        <begin position="1"/>
        <end position="101"/>
    </location>
</feature>
<feature type="region of interest" description="Disordered" evidence="3">
    <location>
        <begin position="1"/>
        <end position="20"/>
    </location>
</feature>
<feature type="binding site" evidence="2">
    <location>
        <position position="25"/>
    </location>
    <ligand>
        <name>iron-sulfur cluster</name>
        <dbReference type="ChEBI" id="CHEBI:30408"/>
    </ligand>
</feature>
<feature type="binding site" evidence="2">
    <location>
        <position position="51"/>
    </location>
    <ligand>
        <name>iron-sulfur cluster</name>
        <dbReference type="ChEBI" id="CHEBI:30408"/>
    </ligand>
</feature>
<feature type="binding site" evidence="1">
    <location>
        <position position="55"/>
    </location>
    <ligand>
        <name>iron-sulfur cluster</name>
        <dbReference type="ChEBI" id="CHEBI:30408"/>
    </ligand>
</feature>
<feature type="binding site" evidence="1">
    <location>
        <position position="58"/>
    </location>
    <ligand>
        <name>iron-sulfur cluster</name>
        <dbReference type="ChEBI" id="CHEBI:30408"/>
    </ligand>
</feature>
<feature type="modified residue" description="Phosphothreonine" evidence="1">
    <location>
        <position position="96"/>
    </location>
</feature>
<feature type="mutagenesis site" description="Slightly decreased inhibition of SigH." evidence="5">
    <original>C</original>
    <variation>A</variation>
    <location>
        <position position="25"/>
    </location>
</feature>
<feature type="mutagenesis site" description="No effect." evidence="5">
    <original>C</original>
    <variation>A</variation>
    <location>
        <position position="40"/>
    </location>
</feature>
<feature type="mutagenesis site" description="Decreased inhibition of SigH; reduced interaction with SigH." evidence="5">
    <original>C</original>
    <variation>A</variation>
    <location>
        <position position="55"/>
    </location>
</feature>
<feature type="mutagenesis site" description="Decreased inhibition of SigH; reduced interaction with SigH." evidence="5">
    <original>C</original>
    <variation>A</variation>
    <location>
        <position position="58"/>
    </location>
</feature>
<feature type="mutagenesis site" description="No effect." evidence="5">
    <original>C</original>
    <variation>A</variation>
    <location>
        <position position="76"/>
    </location>
</feature>
<organism>
    <name type="scientific">Mycolicibacterium smegmatis (strain ATCC 700084 / mc(2)155)</name>
    <name type="common">Mycobacterium smegmatis</name>
    <dbReference type="NCBI Taxonomy" id="246196"/>
    <lineage>
        <taxon>Bacteria</taxon>
        <taxon>Bacillati</taxon>
        <taxon>Actinomycetota</taxon>
        <taxon>Actinomycetes</taxon>
        <taxon>Mycobacteriales</taxon>
        <taxon>Mycobacteriaceae</taxon>
        <taxon>Mycolicibacterium</taxon>
    </lineage>
</organism>